<organism>
    <name type="scientific">Brucella suis biovar 1 (strain 1330)</name>
    <dbReference type="NCBI Taxonomy" id="204722"/>
    <lineage>
        <taxon>Bacteria</taxon>
        <taxon>Pseudomonadati</taxon>
        <taxon>Pseudomonadota</taxon>
        <taxon>Alphaproteobacteria</taxon>
        <taxon>Hyphomicrobiales</taxon>
        <taxon>Brucellaceae</taxon>
        <taxon>Brucella/Ochrobactrum group</taxon>
        <taxon>Brucella</taxon>
    </lineage>
</organism>
<sequence length="511" mass="56359">MASDSSFPGASSNVAEYSVSEISGALKRTVEDTFGHVRVRGEISGYRGPHSSGHAYFALKDDRARLEAVIWRGSMSRLRFRPEEGMEVIATGKLTTYPGSSKYQIVIEQMEPAGAGALMALLEERKQRLAAEGLFDPALKQLLPFMPRVIGVVTSPTGAVIRDIIHRISDRYPLRVIVWPVRVQGDTCGPEVATAVNGFNTLPDDGPIPRPDVLIVARGGGSLEDLWGFNDEIVVRAVAASHIPVISAVGHETDWTLIDLAADMRAPTPTGAAEMAVPVKADLQASLASQSARLSSAMSRFFDQKRQAHRAAARAMPSADQLLALPRRRFDEAASRLTRALFVNTQKKRVHFDGHARQLSPRLLQRRLVELERGVTMLGQRLPRALEAFLRERRTAFTHRANRLSPEPILRRTRLTGSTLEQLDRRRDQAVRLLIERVKRRSQELDRLMRTLSYESVLERGFAVVFDAQGKPVKQAAAVLPGDALSVRFRDGDVGVVARAGLTIPDPTKGQ</sequence>
<dbReference type="EC" id="3.1.11.6" evidence="1"/>
<dbReference type="EMBL" id="AE014292">
    <property type="protein sequence ID" value="AAN33946.1"/>
    <property type="molecule type" value="Genomic_DNA"/>
</dbReference>
<dbReference type="EMBL" id="CP002998">
    <property type="protein sequence ID" value="AEM20222.1"/>
    <property type="molecule type" value="Genomic_DNA"/>
</dbReference>
<dbReference type="SMR" id="Q8FVR1"/>
<dbReference type="KEGG" id="bms:BRA0764"/>
<dbReference type="KEGG" id="bsi:BS1330_II0757"/>
<dbReference type="PATRIC" id="fig|204722.21.peg.1352"/>
<dbReference type="HOGENOM" id="CLU_023625_3_1_5"/>
<dbReference type="PhylomeDB" id="Q8FVR1"/>
<dbReference type="PRO" id="PR:Q8FVR1"/>
<dbReference type="Proteomes" id="UP000007104">
    <property type="component" value="Chromosome II"/>
</dbReference>
<dbReference type="GO" id="GO:0005737">
    <property type="term" value="C:cytoplasm"/>
    <property type="evidence" value="ECO:0007669"/>
    <property type="project" value="UniProtKB-SubCell"/>
</dbReference>
<dbReference type="GO" id="GO:0009318">
    <property type="term" value="C:exodeoxyribonuclease VII complex"/>
    <property type="evidence" value="ECO:0007669"/>
    <property type="project" value="InterPro"/>
</dbReference>
<dbReference type="GO" id="GO:0008855">
    <property type="term" value="F:exodeoxyribonuclease VII activity"/>
    <property type="evidence" value="ECO:0007669"/>
    <property type="project" value="UniProtKB-UniRule"/>
</dbReference>
<dbReference type="GO" id="GO:0003676">
    <property type="term" value="F:nucleic acid binding"/>
    <property type="evidence" value="ECO:0007669"/>
    <property type="project" value="InterPro"/>
</dbReference>
<dbReference type="GO" id="GO:0006308">
    <property type="term" value="P:DNA catabolic process"/>
    <property type="evidence" value="ECO:0007669"/>
    <property type="project" value="UniProtKB-UniRule"/>
</dbReference>
<dbReference type="CDD" id="cd04489">
    <property type="entry name" value="ExoVII_LU_OBF"/>
    <property type="match status" value="1"/>
</dbReference>
<dbReference type="HAMAP" id="MF_00378">
    <property type="entry name" value="Exonuc_7_L"/>
    <property type="match status" value="1"/>
</dbReference>
<dbReference type="InterPro" id="IPR003753">
    <property type="entry name" value="Exonuc_VII_L"/>
</dbReference>
<dbReference type="InterPro" id="IPR020579">
    <property type="entry name" value="Exonuc_VII_lsu_C"/>
</dbReference>
<dbReference type="InterPro" id="IPR025824">
    <property type="entry name" value="OB-fold_nuc-bd_dom"/>
</dbReference>
<dbReference type="NCBIfam" id="TIGR00237">
    <property type="entry name" value="xseA"/>
    <property type="match status" value="1"/>
</dbReference>
<dbReference type="PANTHER" id="PTHR30008">
    <property type="entry name" value="EXODEOXYRIBONUCLEASE 7 LARGE SUBUNIT"/>
    <property type="match status" value="1"/>
</dbReference>
<dbReference type="PANTHER" id="PTHR30008:SF0">
    <property type="entry name" value="EXODEOXYRIBONUCLEASE 7 LARGE SUBUNIT"/>
    <property type="match status" value="1"/>
</dbReference>
<dbReference type="Pfam" id="PF02601">
    <property type="entry name" value="Exonuc_VII_L"/>
    <property type="match status" value="2"/>
</dbReference>
<dbReference type="Pfam" id="PF13742">
    <property type="entry name" value="tRNA_anti_2"/>
    <property type="match status" value="1"/>
</dbReference>
<keyword id="KW-0963">Cytoplasm</keyword>
<keyword id="KW-0269">Exonuclease</keyword>
<keyword id="KW-0378">Hydrolase</keyword>
<keyword id="KW-0540">Nuclease</keyword>
<gene>
    <name evidence="1" type="primary">xseA</name>
    <name type="ordered locus">BRA0764</name>
    <name type="ordered locus">BS1330_II0757</name>
</gene>
<reference key="1">
    <citation type="journal article" date="2002" name="Proc. Natl. Acad. Sci. U.S.A.">
        <title>The Brucella suis genome reveals fundamental similarities between animal and plant pathogens and symbionts.</title>
        <authorList>
            <person name="Paulsen I.T."/>
            <person name="Seshadri R."/>
            <person name="Nelson K.E."/>
            <person name="Eisen J.A."/>
            <person name="Heidelberg J.F."/>
            <person name="Read T.D."/>
            <person name="Dodson R.J."/>
            <person name="Umayam L.A."/>
            <person name="Brinkac L.M."/>
            <person name="Beanan M.J."/>
            <person name="Daugherty S.C."/>
            <person name="DeBoy R.T."/>
            <person name="Durkin A.S."/>
            <person name="Kolonay J.F."/>
            <person name="Madupu R."/>
            <person name="Nelson W.C."/>
            <person name="Ayodeji B."/>
            <person name="Kraul M."/>
            <person name="Shetty J."/>
            <person name="Malek J.A."/>
            <person name="Van Aken S.E."/>
            <person name="Riedmuller S."/>
            <person name="Tettelin H."/>
            <person name="Gill S.R."/>
            <person name="White O."/>
            <person name="Salzberg S.L."/>
            <person name="Hoover D.L."/>
            <person name="Lindler L.E."/>
            <person name="Halling S.M."/>
            <person name="Boyle S.M."/>
            <person name="Fraser C.M."/>
        </authorList>
    </citation>
    <scope>NUCLEOTIDE SEQUENCE [LARGE SCALE GENOMIC DNA]</scope>
    <source>
        <strain>1330</strain>
    </source>
</reference>
<reference key="2">
    <citation type="journal article" date="2011" name="J. Bacteriol.">
        <title>Revised genome sequence of Brucella suis 1330.</title>
        <authorList>
            <person name="Tae H."/>
            <person name="Shallom S."/>
            <person name="Settlage R."/>
            <person name="Preston D."/>
            <person name="Adams L.G."/>
            <person name="Garner H.R."/>
        </authorList>
    </citation>
    <scope>NUCLEOTIDE SEQUENCE [LARGE SCALE GENOMIC DNA]</scope>
    <source>
        <strain>1330</strain>
    </source>
</reference>
<name>EX7L_BRUSU</name>
<comment type="function">
    <text evidence="1">Bidirectionally degrades single-stranded DNA into large acid-insoluble oligonucleotides, which are then degraded further into small acid-soluble oligonucleotides.</text>
</comment>
<comment type="catalytic activity">
    <reaction evidence="1">
        <text>Exonucleolytic cleavage in either 5'- to 3'- or 3'- to 5'-direction to yield nucleoside 5'-phosphates.</text>
        <dbReference type="EC" id="3.1.11.6"/>
    </reaction>
</comment>
<comment type="subunit">
    <text evidence="1">Heterooligomer composed of large and small subunits.</text>
</comment>
<comment type="subcellular location">
    <subcellularLocation>
        <location evidence="1">Cytoplasm</location>
    </subcellularLocation>
</comment>
<comment type="similarity">
    <text evidence="1">Belongs to the XseA family.</text>
</comment>
<proteinExistence type="inferred from homology"/>
<protein>
    <recommendedName>
        <fullName evidence="1">Exodeoxyribonuclease 7 large subunit</fullName>
        <ecNumber evidence="1">3.1.11.6</ecNumber>
    </recommendedName>
    <alternativeName>
        <fullName evidence="1">Exodeoxyribonuclease VII large subunit</fullName>
        <shortName evidence="1">Exonuclease VII large subunit</shortName>
    </alternativeName>
</protein>
<evidence type="ECO:0000255" key="1">
    <source>
        <dbReference type="HAMAP-Rule" id="MF_00378"/>
    </source>
</evidence>
<accession>Q8FVR1</accession>
<accession>G0KDD4</accession>
<feature type="chain" id="PRO_0000197831" description="Exodeoxyribonuclease 7 large subunit">
    <location>
        <begin position="1"/>
        <end position="511"/>
    </location>
</feature>